<accession>B0R656</accession>
<sequence>MPQPNRPRKGSMGFSPRKRAESEVPRFNSWPADDGEVGLQGFAGYKAGMTHVVLVDDKANAPTEGMETTVPVTVVETPPMRAAAVRLYEDTPYGKKPLTEVWADDTHESLDRTLSVPDEGGDTDELIEALDTEEIADIRVITHTVPGDTAGVPKKNPDVMETRVGGGTLADRLEFAADLIEDGGVHAFGDVFRAGEFTDAAGITKGKGTQGPVKRWGVQKRKGKHARQGWRRRIGNLGPWNPSRVRSTVPQQGQTGYHQRTELNKRLIDINDGDEPTPDGGFPNYGEVDGPYTLVKGSVPGPEQRLVRFRPAVRPNESPRLDPEVRYVSTASNQG</sequence>
<organism>
    <name type="scientific">Halobacterium salinarum (strain ATCC 29341 / DSM 671 / R1)</name>
    <dbReference type="NCBI Taxonomy" id="478009"/>
    <lineage>
        <taxon>Archaea</taxon>
        <taxon>Methanobacteriati</taxon>
        <taxon>Methanobacteriota</taxon>
        <taxon>Stenosarchaea group</taxon>
        <taxon>Halobacteria</taxon>
        <taxon>Halobacteriales</taxon>
        <taxon>Halobacteriaceae</taxon>
        <taxon>Halobacterium</taxon>
        <taxon>Halobacterium salinarum NRC-34001</taxon>
    </lineage>
</organism>
<gene>
    <name evidence="1" type="primary">rpl3</name>
    <name type="ordered locus">OE_3388F</name>
</gene>
<keyword id="KW-0687">Ribonucleoprotein</keyword>
<keyword id="KW-0689">Ribosomal protein</keyword>
<keyword id="KW-0694">RNA-binding</keyword>
<keyword id="KW-0699">rRNA-binding</keyword>
<reference key="1">
    <citation type="journal article" date="2008" name="Genomics">
        <title>Evolution in the laboratory: the genome of Halobacterium salinarum strain R1 compared to that of strain NRC-1.</title>
        <authorList>
            <person name="Pfeiffer F."/>
            <person name="Schuster S.C."/>
            <person name="Broicher A."/>
            <person name="Falb M."/>
            <person name="Palm P."/>
            <person name="Rodewald K."/>
            <person name="Ruepp A."/>
            <person name="Soppa J."/>
            <person name="Tittor J."/>
            <person name="Oesterhelt D."/>
        </authorList>
    </citation>
    <scope>NUCLEOTIDE SEQUENCE [LARGE SCALE GENOMIC DNA]</scope>
    <source>
        <strain>ATCC 29341 / DSM 671 / R1</strain>
    </source>
</reference>
<name>RL3_HALS3</name>
<protein>
    <recommendedName>
        <fullName evidence="1">Large ribosomal subunit protein uL3</fullName>
    </recommendedName>
    <alternativeName>
        <fullName evidence="3">50S ribosomal protein L3</fullName>
    </alternativeName>
</protein>
<proteinExistence type="inferred from homology"/>
<dbReference type="EMBL" id="AM774415">
    <property type="protein sequence ID" value="CAP14225.1"/>
    <property type="molecule type" value="Genomic_DNA"/>
</dbReference>
<dbReference type="RefSeq" id="WP_010903234.1">
    <property type="nucleotide sequence ID" value="NC_010364.1"/>
</dbReference>
<dbReference type="SMR" id="B0R656"/>
<dbReference type="EnsemblBacteria" id="CAP14225">
    <property type="protein sequence ID" value="CAP14225"/>
    <property type="gene ID" value="OE_3388F"/>
</dbReference>
<dbReference type="KEGG" id="hsl:OE_3388F"/>
<dbReference type="HOGENOM" id="CLU_033361_2_0_2"/>
<dbReference type="PhylomeDB" id="B0R656"/>
<dbReference type="Proteomes" id="UP000001321">
    <property type="component" value="Chromosome"/>
</dbReference>
<dbReference type="GO" id="GO:0022625">
    <property type="term" value="C:cytosolic large ribosomal subunit"/>
    <property type="evidence" value="ECO:0007669"/>
    <property type="project" value="TreeGrafter"/>
</dbReference>
<dbReference type="GO" id="GO:0019843">
    <property type="term" value="F:rRNA binding"/>
    <property type="evidence" value="ECO:0007669"/>
    <property type="project" value="UniProtKB-UniRule"/>
</dbReference>
<dbReference type="GO" id="GO:0003735">
    <property type="term" value="F:structural constituent of ribosome"/>
    <property type="evidence" value="ECO:0007669"/>
    <property type="project" value="InterPro"/>
</dbReference>
<dbReference type="GO" id="GO:0006412">
    <property type="term" value="P:translation"/>
    <property type="evidence" value="ECO:0007669"/>
    <property type="project" value="UniProtKB-UniRule"/>
</dbReference>
<dbReference type="Gene3D" id="3.30.1430.10">
    <property type="match status" value="1"/>
</dbReference>
<dbReference type="Gene3D" id="4.10.960.10">
    <property type="entry name" value="Ribosomal protein L3, domain 3"/>
    <property type="match status" value="1"/>
</dbReference>
<dbReference type="Gene3D" id="2.40.30.10">
    <property type="entry name" value="Translation factors"/>
    <property type="match status" value="1"/>
</dbReference>
<dbReference type="HAMAP" id="MF_01325_A">
    <property type="entry name" value="Ribosomal_uL3_A"/>
    <property type="match status" value="1"/>
</dbReference>
<dbReference type="InterPro" id="IPR045077">
    <property type="entry name" value="L3_arc_euk"/>
</dbReference>
<dbReference type="InterPro" id="IPR044892">
    <property type="entry name" value="Ribosomal_L3_dom_3_arc_sf"/>
</dbReference>
<dbReference type="InterPro" id="IPR000597">
    <property type="entry name" value="Ribosomal_uL3"/>
</dbReference>
<dbReference type="InterPro" id="IPR019928">
    <property type="entry name" value="Ribosomal_uL3_arc"/>
</dbReference>
<dbReference type="InterPro" id="IPR019926">
    <property type="entry name" value="Ribosomal_uL3_CS"/>
</dbReference>
<dbReference type="InterPro" id="IPR009000">
    <property type="entry name" value="Transl_B-barrel_sf"/>
</dbReference>
<dbReference type="NCBIfam" id="TIGR03626">
    <property type="entry name" value="L3_arch"/>
    <property type="match status" value="1"/>
</dbReference>
<dbReference type="NCBIfam" id="NF003261">
    <property type="entry name" value="PRK04231.1"/>
    <property type="match status" value="1"/>
</dbReference>
<dbReference type="PANTHER" id="PTHR11363">
    <property type="entry name" value="60S RIBOSOMAL PROTEIN L3-RELATED"/>
    <property type="match status" value="1"/>
</dbReference>
<dbReference type="PANTHER" id="PTHR11363:SF5">
    <property type="entry name" value="LARGE RIBOSOMAL SUBUNIT PROTEIN UL3"/>
    <property type="match status" value="1"/>
</dbReference>
<dbReference type="Pfam" id="PF00297">
    <property type="entry name" value="Ribosomal_L3"/>
    <property type="match status" value="1"/>
</dbReference>
<dbReference type="SUPFAM" id="SSF50447">
    <property type="entry name" value="Translation proteins"/>
    <property type="match status" value="1"/>
</dbReference>
<dbReference type="PROSITE" id="PS00474">
    <property type="entry name" value="RIBOSOMAL_L3"/>
    <property type="match status" value="1"/>
</dbReference>
<comment type="function">
    <text evidence="1">One of the primary rRNA binding proteins, it binds directly near the 3'-end of the 23S rRNA, where it nucleates assembly of the 50S subunit.</text>
</comment>
<comment type="subunit">
    <text evidence="1">Part of the 50S ribosomal subunit. Forms a cluster with proteins L14 and L24e.</text>
</comment>
<comment type="similarity">
    <text evidence="1">Belongs to the universal ribosomal protein uL3 family.</text>
</comment>
<evidence type="ECO:0000255" key="1">
    <source>
        <dbReference type="HAMAP-Rule" id="MF_01325"/>
    </source>
</evidence>
<evidence type="ECO:0000256" key="2">
    <source>
        <dbReference type="SAM" id="MobiDB-lite"/>
    </source>
</evidence>
<evidence type="ECO:0000305" key="3"/>
<feature type="chain" id="PRO_1000141875" description="Large ribosomal subunit protein uL3">
    <location>
        <begin position="1"/>
        <end position="335"/>
    </location>
</feature>
<feature type="region of interest" description="Disordered" evidence="2">
    <location>
        <begin position="1"/>
        <end position="35"/>
    </location>
</feature>
<feature type="region of interest" description="Disordered" evidence="2">
    <location>
        <begin position="234"/>
        <end position="256"/>
    </location>
</feature>
<feature type="region of interest" description="Disordered" evidence="2">
    <location>
        <begin position="312"/>
        <end position="335"/>
    </location>
</feature>
<feature type="compositionally biased region" description="Polar residues" evidence="2">
    <location>
        <begin position="244"/>
        <end position="256"/>
    </location>
</feature>